<feature type="chain" id="PRO_1000013439" description="Large ribosomal subunit protein bL34">
    <location>
        <begin position="1"/>
        <end position="45"/>
    </location>
</feature>
<feature type="region of interest" description="Disordered" evidence="2">
    <location>
        <begin position="1"/>
        <end position="21"/>
    </location>
</feature>
<feature type="compositionally biased region" description="Polar residues" evidence="2">
    <location>
        <begin position="1"/>
        <end position="10"/>
    </location>
</feature>
<feature type="compositionally biased region" description="Basic residues" evidence="2">
    <location>
        <begin position="11"/>
        <end position="20"/>
    </location>
</feature>
<protein>
    <recommendedName>
        <fullName evidence="1">Large ribosomal subunit protein bL34</fullName>
    </recommendedName>
    <alternativeName>
        <fullName evidence="3">50S ribosomal protein L34</fullName>
    </alternativeName>
</protein>
<evidence type="ECO:0000255" key="1">
    <source>
        <dbReference type="HAMAP-Rule" id="MF_00391"/>
    </source>
</evidence>
<evidence type="ECO:0000256" key="2">
    <source>
        <dbReference type="SAM" id="MobiDB-lite"/>
    </source>
</evidence>
<evidence type="ECO:0000305" key="3"/>
<name>RL34_SHEB8</name>
<keyword id="KW-0687">Ribonucleoprotein</keyword>
<keyword id="KW-0689">Ribosomal protein</keyword>
<proteinExistence type="inferred from homology"/>
<comment type="similarity">
    <text evidence="1">Belongs to the bacterial ribosomal protein bL34 family.</text>
</comment>
<reference key="1">
    <citation type="submission" date="2007-07" db="EMBL/GenBank/DDBJ databases">
        <title>Complete sequence of chromosome of Shewanella baltica OS185.</title>
        <authorList>
            <consortium name="US DOE Joint Genome Institute"/>
            <person name="Copeland A."/>
            <person name="Lucas S."/>
            <person name="Lapidus A."/>
            <person name="Barry K."/>
            <person name="Glavina del Rio T."/>
            <person name="Dalin E."/>
            <person name="Tice H."/>
            <person name="Pitluck S."/>
            <person name="Sims D."/>
            <person name="Brettin T."/>
            <person name="Bruce D."/>
            <person name="Detter J.C."/>
            <person name="Han C."/>
            <person name="Schmutz J."/>
            <person name="Larimer F."/>
            <person name="Land M."/>
            <person name="Hauser L."/>
            <person name="Kyrpides N."/>
            <person name="Mikhailova N."/>
            <person name="Brettar I."/>
            <person name="Rodrigues J."/>
            <person name="Konstantinidis K."/>
            <person name="Tiedje J."/>
            <person name="Richardson P."/>
        </authorList>
    </citation>
    <scope>NUCLEOTIDE SEQUENCE [LARGE SCALE GENOMIC DNA]</scope>
    <source>
        <strain>OS185</strain>
    </source>
</reference>
<organism>
    <name type="scientific">Shewanella baltica (strain OS185)</name>
    <dbReference type="NCBI Taxonomy" id="402882"/>
    <lineage>
        <taxon>Bacteria</taxon>
        <taxon>Pseudomonadati</taxon>
        <taxon>Pseudomonadota</taxon>
        <taxon>Gammaproteobacteria</taxon>
        <taxon>Alteromonadales</taxon>
        <taxon>Shewanellaceae</taxon>
        <taxon>Shewanella</taxon>
    </lineage>
</organism>
<accession>A6WUK7</accession>
<gene>
    <name evidence="1" type="primary">rpmH</name>
    <name type="ordered locus">Shew185_4382</name>
</gene>
<sequence length="45" mass="5153">MSKRTFQPSNLKRKRSHGFRARMATVGGRKVLARRRAKGRARLSA</sequence>
<dbReference type="EMBL" id="CP000753">
    <property type="protein sequence ID" value="ABS10496.1"/>
    <property type="molecule type" value="Genomic_DNA"/>
</dbReference>
<dbReference type="RefSeq" id="WP_006083827.1">
    <property type="nucleotide sequence ID" value="NC_009665.1"/>
</dbReference>
<dbReference type="SMR" id="A6WUK7"/>
<dbReference type="GeneID" id="90572020"/>
<dbReference type="KEGG" id="sbm:Shew185_4382"/>
<dbReference type="HOGENOM" id="CLU_129938_2_0_6"/>
<dbReference type="GO" id="GO:1990904">
    <property type="term" value="C:ribonucleoprotein complex"/>
    <property type="evidence" value="ECO:0007669"/>
    <property type="project" value="UniProtKB-KW"/>
</dbReference>
<dbReference type="GO" id="GO:0005840">
    <property type="term" value="C:ribosome"/>
    <property type="evidence" value="ECO:0007669"/>
    <property type="project" value="UniProtKB-KW"/>
</dbReference>
<dbReference type="GO" id="GO:0003735">
    <property type="term" value="F:structural constituent of ribosome"/>
    <property type="evidence" value="ECO:0007669"/>
    <property type="project" value="InterPro"/>
</dbReference>
<dbReference type="GO" id="GO:0006412">
    <property type="term" value="P:translation"/>
    <property type="evidence" value="ECO:0007669"/>
    <property type="project" value="UniProtKB-UniRule"/>
</dbReference>
<dbReference type="FunFam" id="1.10.287.3980:FF:000001">
    <property type="entry name" value="Mitochondrial ribosomal protein L34"/>
    <property type="match status" value="1"/>
</dbReference>
<dbReference type="Gene3D" id="1.10.287.3980">
    <property type="match status" value="1"/>
</dbReference>
<dbReference type="HAMAP" id="MF_00391">
    <property type="entry name" value="Ribosomal_bL34"/>
    <property type="match status" value="1"/>
</dbReference>
<dbReference type="InterPro" id="IPR000271">
    <property type="entry name" value="Ribosomal_bL34"/>
</dbReference>
<dbReference type="InterPro" id="IPR020939">
    <property type="entry name" value="Ribosomal_bL34_CS"/>
</dbReference>
<dbReference type="NCBIfam" id="TIGR01030">
    <property type="entry name" value="rpmH_bact"/>
    <property type="match status" value="1"/>
</dbReference>
<dbReference type="PANTHER" id="PTHR14503:SF4">
    <property type="entry name" value="LARGE RIBOSOMAL SUBUNIT PROTEIN BL34M"/>
    <property type="match status" value="1"/>
</dbReference>
<dbReference type="PANTHER" id="PTHR14503">
    <property type="entry name" value="MITOCHONDRIAL RIBOSOMAL PROTEIN 34 FAMILY MEMBER"/>
    <property type="match status" value="1"/>
</dbReference>
<dbReference type="Pfam" id="PF00468">
    <property type="entry name" value="Ribosomal_L34"/>
    <property type="match status" value="1"/>
</dbReference>
<dbReference type="PROSITE" id="PS00784">
    <property type="entry name" value="RIBOSOMAL_L34"/>
    <property type="match status" value="1"/>
</dbReference>